<proteinExistence type="inferred from homology"/>
<feature type="chain" id="PRO_0000115593" description="Small ribosomal subunit protein uS15">
    <location>
        <begin position="1"/>
        <end position="86"/>
    </location>
</feature>
<feature type="region of interest" description="Disordered" evidence="2">
    <location>
        <begin position="1"/>
        <end position="22"/>
    </location>
</feature>
<feature type="compositionally biased region" description="Basic and acidic residues" evidence="2">
    <location>
        <begin position="7"/>
        <end position="16"/>
    </location>
</feature>
<reference key="1">
    <citation type="journal article" date="2005" name="J. Bacteriol.">
        <title>Insights into genome plasticity and pathogenicity of the plant pathogenic Bacterium Xanthomonas campestris pv. vesicatoria revealed by the complete genome sequence.</title>
        <authorList>
            <person name="Thieme F."/>
            <person name="Koebnik R."/>
            <person name="Bekel T."/>
            <person name="Berger C."/>
            <person name="Boch J."/>
            <person name="Buettner D."/>
            <person name="Caldana C."/>
            <person name="Gaigalat L."/>
            <person name="Goesmann A."/>
            <person name="Kay S."/>
            <person name="Kirchner O."/>
            <person name="Lanz C."/>
            <person name="Linke B."/>
            <person name="McHardy A.C."/>
            <person name="Meyer F."/>
            <person name="Mittenhuber G."/>
            <person name="Nies D.H."/>
            <person name="Niesbach-Kloesgen U."/>
            <person name="Patschkowski T."/>
            <person name="Rueckert C."/>
            <person name="Rupp O."/>
            <person name="Schneiker S."/>
            <person name="Schuster S.C."/>
            <person name="Vorhoelter F.J."/>
            <person name="Weber E."/>
            <person name="Puehler A."/>
            <person name="Bonas U."/>
            <person name="Bartels D."/>
            <person name="Kaiser O."/>
        </authorList>
    </citation>
    <scope>NUCLEOTIDE SEQUENCE [LARGE SCALE GENOMIC DNA]</scope>
    <source>
        <strain>85-10</strain>
    </source>
</reference>
<comment type="function">
    <text evidence="1">One of the primary rRNA binding proteins, it binds directly to 16S rRNA where it helps nucleate assembly of the platform of the 30S subunit by binding and bridging several RNA helices of the 16S rRNA.</text>
</comment>
<comment type="function">
    <text evidence="1">Forms an intersubunit bridge (bridge B4) with the 23S rRNA of the 50S subunit in the ribosome.</text>
</comment>
<comment type="subunit">
    <text evidence="1">Part of the 30S ribosomal subunit. Forms a bridge to the 50S subunit in the 70S ribosome, contacting the 23S rRNA.</text>
</comment>
<comment type="similarity">
    <text evidence="1">Belongs to the universal ribosomal protein uS15 family.</text>
</comment>
<sequence length="86" mass="10097">MSVDTQKVIEDNKRSAQDTGSPEVQVALLTARIELLTGHFKTHKKDHHSRRGLLQMVNRRRSLLDYLKKKDNERYKSLIEKLGLRR</sequence>
<gene>
    <name evidence="1" type="primary">rpsO</name>
    <name type="ordered locus">XCV2834</name>
</gene>
<accession>Q3BRP8</accession>
<organism>
    <name type="scientific">Xanthomonas euvesicatoria pv. vesicatoria (strain 85-10)</name>
    <name type="common">Xanthomonas campestris pv. vesicatoria</name>
    <dbReference type="NCBI Taxonomy" id="316273"/>
    <lineage>
        <taxon>Bacteria</taxon>
        <taxon>Pseudomonadati</taxon>
        <taxon>Pseudomonadota</taxon>
        <taxon>Gammaproteobacteria</taxon>
        <taxon>Lysobacterales</taxon>
        <taxon>Lysobacteraceae</taxon>
        <taxon>Xanthomonas</taxon>
    </lineage>
</organism>
<keyword id="KW-0687">Ribonucleoprotein</keyword>
<keyword id="KW-0689">Ribosomal protein</keyword>
<keyword id="KW-0694">RNA-binding</keyword>
<keyword id="KW-0699">rRNA-binding</keyword>
<evidence type="ECO:0000255" key="1">
    <source>
        <dbReference type="HAMAP-Rule" id="MF_01343"/>
    </source>
</evidence>
<evidence type="ECO:0000256" key="2">
    <source>
        <dbReference type="SAM" id="MobiDB-lite"/>
    </source>
</evidence>
<evidence type="ECO:0000305" key="3"/>
<name>RS15_XANE5</name>
<protein>
    <recommendedName>
        <fullName evidence="1">Small ribosomal subunit protein uS15</fullName>
    </recommendedName>
    <alternativeName>
        <fullName evidence="3">30S ribosomal protein S15</fullName>
    </alternativeName>
</protein>
<dbReference type="EMBL" id="AM039952">
    <property type="protein sequence ID" value="CAJ24513.1"/>
    <property type="molecule type" value="Genomic_DNA"/>
</dbReference>
<dbReference type="RefSeq" id="WP_003485583.1">
    <property type="nucleotide sequence ID" value="NZ_CP017190.1"/>
</dbReference>
<dbReference type="SMR" id="Q3BRP8"/>
<dbReference type="STRING" id="456327.BJD11_08705"/>
<dbReference type="GeneID" id="97510971"/>
<dbReference type="KEGG" id="xcv:XCV2834"/>
<dbReference type="eggNOG" id="COG0184">
    <property type="taxonomic scope" value="Bacteria"/>
</dbReference>
<dbReference type="HOGENOM" id="CLU_148518_1_0_6"/>
<dbReference type="Proteomes" id="UP000007069">
    <property type="component" value="Chromosome"/>
</dbReference>
<dbReference type="GO" id="GO:0022627">
    <property type="term" value="C:cytosolic small ribosomal subunit"/>
    <property type="evidence" value="ECO:0007669"/>
    <property type="project" value="TreeGrafter"/>
</dbReference>
<dbReference type="GO" id="GO:0019843">
    <property type="term" value="F:rRNA binding"/>
    <property type="evidence" value="ECO:0007669"/>
    <property type="project" value="UniProtKB-UniRule"/>
</dbReference>
<dbReference type="GO" id="GO:0003735">
    <property type="term" value="F:structural constituent of ribosome"/>
    <property type="evidence" value="ECO:0007669"/>
    <property type="project" value="InterPro"/>
</dbReference>
<dbReference type="GO" id="GO:0006412">
    <property type="term" value="P:translation"/>
    <property type="evidence" value="ECO:0007669"/>
    <property type="project" value="UniProtKB-UniRule"/>
</dbReference>
<dbReference type="CDD" id="cd00353">
    <property type="entry name" value="Ribosomal_S15p_S13e"/>
    <property type="match status" value="1"/>
</dbReference>
<dbReference type="FunFam" id="1.10.287.10:FF:000002">
    <property type="entry name" value="30S ribosomal protein S15"/>
    <property type="match status" value="1"/>
</dbReference>
<dbReference type="Gene3D" id="6.10.250.3130">
    <property type="match status" value="1"/>
</dbReference>
<dbReference type="Gene3D" id="1.10.287.10">
    <property type="entry name" value="S15/NS1, RNA-binding"/>
    <property type="match status" value="1"/>
</dbReference>
<dbReference type="HAMAP" id="MF_01343_B">
    <property type="entry name" value="Ribosomal_uS15_B"/>
    <property type="match status" value="1"/>
</dbReference>
<dbReference type="InterPro" id="IPR000589">
    <property type="entry name" value="Ribosomal_uS15"/>
</dbReference>
<dbReference type="InterPro" id="IPR005290">
    <property type="entry name" value="Ribosomal_uS15_bac-type"/>
</dbReference>
<dbReference type="InterPro" id="IPR009068">
    <property type="entry name" value="uS15_NS1_RNA-bd_sf"/>
</dbReference>
<dbReference type="NCBIfam" id="TIGR00952">
    <property type="entry name" value="S15_bact"/>
    <property type="match status" value="1"/>
</dbReference>
<dbReference type="PANTHER" id="PTHR23321">
    <property type="entry name" value="RIBOSOMAL PROTEIN S15, BACTERIAL AND ORGANELLAR"/>
    <property type="match status" value="1"/>
</dbReference>
<dbReference type="PANTHER" id="PTHR23321:SF26">
    <property type="entry name" value="SMALL RIBOSOMAL SUBUNIT PROTEIN US15M"/>
    <property type="match status" value="1"/>
</dbReference>
<dbReference type="Pfam" id="PF00312">
    <property type="entry name" value="Ribosomal_S15"/>
    <property type="match status" value="1"/>
</dbReference>
<dbReference type="SMART" id="SM01387">
    <property type="entry name" value="Ribosomal_S15"/>
    <property type="match status" value="1"/>
</dbReference>
<dbReference type="SUPFAM" id="SSF47060">
    <property type="entry name" value="S15/NS1 RNA-binding domain"/>
    <property type="match status" value="1"/>
</dbReference>
<dbReference type="PROSITE" id="PS00362">
    <property type="entry name" value="RIBOSOMAL_S15"/>
    <property type="match status" value="1"/>
</dbReference>